<name>CPSF5_HUMAN</name>
<comment type="function">
    <text evidence="1 4 5 6 7 8 10 12 13 14 15 16 17 19 20">Component of the cleavage factor Im (CFIm) complex that functions as an activator of the pre-mRNA 3'-end cleavage and polyadenylation processing required for the maturation of pre-mRNA into functional mRNAs (PubMed:14690600, PubMed:15937220, PubMed:17024186, PubMed:17098938, PubMed:29276085, PubMed:8626397, PubMed:9659921). CFIm contributes to the recruitment of multiprotein complexes on specific sequences on the pre-mRNA 3'-end, so called cleavage and polyadenylation signals (pA signals) (PubMed:14690600, PubMed:17024186, PubMed:8626397, PubMed:9659921). Most pre-mRNAs contain multiple pA signals, resulting in alternative cleavage and polyadenylation (APA) producing mRNAs with variable 3'-end formation (PubMed:17098938, PubMed:23187700, PubMed:29276085). The CFIm complex acts as a key regulator of cleavage and polyadenylation site choice during APA through its binding to 5'-UGUA-3' elements localized in the 3'-untranslated region (UTR) for a huge number of pre-mRNAs (PubMed:17098938, PubMed:20695905, PubMed:29276085). NUDT21/CPSF5 activates indirectly the mRNA 3'-processing machinery by recruiting CPSF6 and/or CPSF7 (PubMed:29276085). Binds to 5'-UGUA-3' elements localized upstream of pA signals that act as enhancers of pre-mRNA 3'-end processing (PubMed:14690600, PubMed:15169763, PubMed:17024186, PubMed:20479262, PubMed:22813749, PubMed:8626397). The homodimer mediates simultaneous sequence-specific recognition of two 5'-UGUA-3' elements within the pre-mRNA (PubMed:20479262, PubMed:21295486). Plays a role in somatic cell fate transitions and pluripotency by regulating widespread changes in gene expression through an APA-dependent function (By similarity). Binds to chromatin (By similarity). Binds to, but does not hydrolyze mono- and di-adenosine nucleotides (PubMed:18445629).</text>
</comment>
<comment type="subunit">
    <text evidence="3 5 6 9 10 11 12 13 14 16 17 18 19 20 21">Homodimer (via N- and C-terminus); binds RNA as homodimer (PubMed:18445629, PubMed:20479262, PubMed:20695905). Component of the cleavage factor Im (CFIm) complex which is a heterotetramer composed of two subunits of NUDT21/CPSF5 and two subunits of CPSF6 or CPSF7 or a heterodimer of CPSF6 and CPSF7 (PubMed:14561889, PubMed:20695905, PubMed:21295486, PubMed:23187700, PubMed:8626397, PubMed:9659921). The cleavage factor Im (CFIm) complex associates with the CPSF and CSTF complexes to promote the assembly of the core mRNA 3'-processing machinery (PubMed:29276085). Interacts with CPSF6 (via the RRM domain); this interaction is direct and enhances binding to RNA (PubMed:14561889, PubMed:15169763, PubMed:17172643, PubMed:19864460, PubMed:29276085). Interacts with CPSF7 (PubMed:29276085, Ref.30). Interacts with FIP1L1; this interaction occurs in a RNA sequence-specific manner (PubMed:15937220). Interacts with PABPN1 (PubMed:15169763). Interacts (via N-terminus) with PAPOLA (via C-terminus); this interaction is direct and diminished by acetylation (PubMed:15169763, PubMed:17172643). Interacts with SNRNP70 (PubMed:14561889). Interacts with VIRMA (PubMed:29507755).</text>
</comment>
<comment type="interaction">
    <interactant intactId="EBI-355720">
        <id>O43809</id>
    </interactant>
    <interactant intactId="EBI-930964">
        <id>P54253</id>
        <label>ATXN1</label>
    </interactant>
    <organismsDiffer>false</organismsDiffer>
    <experiments>8</experiments>
</comment>
<comment type="interaction">
    <interactant intactId="EBI-355720">
        <id>O43809</id>
    </interactant>
    <interactant intactId="EBI-2339854">
        <id>Q86X55</id>
        <label>CARM1</label>
    </interactant>
    <organismsDiffer>false</organismsDiffer>
    <experiments>2</experiments>
</comment>
<comment type="interaction">
    <interactant intactId="EBI-355720">
        <id>O43809</id>
    </interactant>
    <interactant intactId="EBI-358410">
        <id>Q16630</id>
        <label>CPSF6</label>
    </interactant>
    <organismsDiffer>false</organismsDiffer>
    <experiments>10</experiments>
</comment>
<comment type="interaction">
    <interactant intactId="EBI-355720">
        <id>O43809</id>
    </interactant>
    <interactant intactId="EBI-1019636">
        <id>Q16630-1</id>
        <label>CPSF6</label>
    </interactant>
    <organismsDiffer>false</organismsDiffer>
    <experiments>4</experiments>
</comment>
<comment type="interaction">
    <interactant intactId="EBI-355720">
        <id>O43809</id>
    </interactant>
    <interactant intactId="EBI-11088043">
        <id>Q16630-2</id>
        <label>CPSF6</label>
    </interactant>
    <organismsDiffer>false</organismsDiffer>
    <experiments>7</experiments>
</comment>
<comment type="interaction">
    <interactant intactId="EBI-355720">
        <id>O43809</id>
    </interactant>
    <interactant intactId="EBI-746909">
        <id>Q8N684</id>
        <label>CPSF7</label>
    </interactant>
    <organismsDiffer>false</organismsDiffer>
    <experiments>5</experiments>
</comment>
<comment type="interaction">
    <interactant intactId="EBI-355720">
        <id>O43809</id>
    </interactant>
    <interactant intactId="EBI-11523759">
        <id>Q8N684-3</id>
        <label>CPSF7</label>
    </interactant>
    <organismsDiffer>false</organismsDiffer>
    <experiments>3</experiments>
</comment>
<comment type="interaction">
    <interactant intactId="EBI-355720">
        <id>O43809</id>
    </interactant>
    <interactant intactId="EBI-6658203">
        <id>Q86YD7</id>
        <label>FAM90A1</label>
    </interactant>
    <organismsDiffer>false</organismsDiffer>
    <experiments>3</experiments>
</comment>
<comment type="interaction">
    <interactant intactId="EBI-355720">
        <id>O43809</id>
    </interactant>
    <interactant intactId="EBI-744302">
        <id>P14136</id>
        <label>GFAP</label>
    </interactant>
    <organismsDiffer>false</organismsDiffer>
    <experiments>3</experiments>
</comment>
<comment type="interaction">
    <interactant intactId="EBI-355720">
        <id>O43809</id>
    </interactant>
    <interactant intactId="EBI-618309">
        <id>Q08379</id>
        <label>GOLGA2</label>
    </interactant>
    <organismsDiffer>false</organismsDiffer>
    <experiments>3</experiments>
</comment>
<comment type="interaction">
    <interactant intactId="EBI-355720">
        <id>O43809</id>
    </interactant>
    <interactant intactId="EBI-11522367">
        <id>Q13422-7</id>
        <label>IKZF1</label>
    </interactant>
    <organismsDiffer>false</organismsDiffer>
    <experiments>3</experiments>
</comment>
<comment type="interaction">
    <interactant intactId="EBI-355720">
        <id>O43809</id>
    </interactant>
    <interactant intactId="EBI-2949715">
        <id>O95678</id>
        <label>KRT75</label>
    </interactant>
    <organismsDiffer>false</organismsDiffer>
    <experiments>3</experiments>
</comment>
<comment type="interaction">
    <interactant intactId="EBI-355720">
        <id>O43809</id>
    </interactant>
    <interactant intactId="EBI-300817">
        <id>P60660</id>
        <label>MYL6</label>
    </interactant>
    <organismsDiffer>false</organismsDiffer>
    <experiments>5</experiments>
</comment>
<comment type="interaction">
    <interactant intactId="EBI-355720">
        <id>O43809</id>
    </interactant>
    <interactant intactId="EBI-741158">
        <id>Q96HA8</id>
        <label>NTAQ1</label>
    </interactant>
    <organismsDiffer>false</organismsDiffer>
    <experiments>5</experiments>
</comment>
<comment type="interaction">
    <interactant intactId="EBI-355720">
        <id>O43809</id>
    </interactant>
    <interactant intactId="EBI-355720">
        <id>O43809</id>
        <label>NUDT21</label>
    </interactant>
    <organismsDiffer>false</organismsDiffer>
    <experiments>6</experiments>
</comment>
<comment type="interaction">
    <interactant intactId="EBI-355720">
        <id>O43809</id>
    </interactant>
    <interactant intactId="EBI-12135327">
        <id>Q8WXF1-2</id>
        <label>PSPC1</label>
    </interactant>
    <organismsDiffer>false</organismsDiffer>
    <experiments>3</experiments>
</comment>
<comment type="interaction">
    <interactant intactId="EBI-355720">
        <id>O43809</id>
    </interactant>
    <interactant intactId="EBI-18959794">
        <id>Q96BU1</id>
        <label>S100PBP</label>
    </interactant>
    <organismsDiffer>false</organismsDiffer>
    <experiments>3</experiments>
</comment>
<comment type="interaction">
    <interactant intactId="EBI-355720">
        <id>O43809</id>
    </interactant>
    <interactant intactId="EBI-11959123">
        <id>Q99932-2</id>
        <label>SPAG8</label>
    </interactant>
    <organismsDiffer>false</organismsDiffer>
    <experiments>3</experiments>
</comment>
<comment type="interaction">
    <interactant intactId="EBI-355720">
        <id>O43809</id>
    </interactant>
    <interactant intactId="EBI-11139477">
        <id>Q96N21</id>
        <label>TEPSIN</label>
    </interactant>
    <organismsDiffer>false</organismsDiffer>
    <experiments>3</experiments>
</comment>
<comment type="interaction">
    <interactant intactId="EBI-355720">
        <id>O43809</id>
    </interactant>
    <interactant intactId="EBI-740098">
        <id>P36406</id>
        <label>TRIM23</label>
    </interactant>
    <organismsDiffer>false</organismsDiffer>
    <experiments>3</experiments>
</comment>
<comment type="interaction">
    <interactant intactId="EBI-355720">
        <id>O43809</id>
    </interactant>
    <interactant intactId="EBI-719493">
        <id>P14373</id>
        <label>TRIM27</label>
    </interactant>
    <organismsDiffer>false</organismsDiffer>
    <experiments>6</experiments>
</comment>
<comment type="interaction">
    <interactant intactId="EBI-355720">
        <id>O43809</id>
    </interactant>
    <interactant intactId="EBI-625509">
        <id>Q8N720</id>
        <label>ZNF655</label>
    </interactant>
    <organismsDiffer>false</organismsDiffer>
    <experiments>3</experiments>
</comment>
<comment type="interaction">
    <interactant intactId="EBI-355720">
        <id>O43809</id>
    </interactant>
    <interactant intactId="EBI-527853">
        <id>Q9UGI0</id>
        <label>ZRANB1</label>
    </interactant>
    <organismsDiffer>false</organismsDiffer>
    <experiments>3</experiments>
</comment>
<comment type="subcellular location">
    <subcellularLocation>
        <location evidence="5 11 13 20">Nucleus</location>
    </subcellularLocation>
    <subcellularLocation>
        <location evidence="11">Cytoplasm</location>
    </subcellularLocation>
    <text evidence="5 11">Shuttles between the nucleus and the cytoplasm in a transcription- and XPO1/CRM1-independent manner, most probably in complex with the cleavage factor Im complex (CFIm) (PubMed:19864460). In punctate subnuclear structures localized adjacent to nuclear speckles, called paraspeckles (PubMed:15169763).</text>
</comment>
<comment type="tissue specificity">
    <text evidence="8">Expressed in the heart, brain, placenta, lung, liver, skeletal muscle, kidney and pancreas.</text>
</comment>
<comment type="PTM">
    <text evidence="9">Acetylated mainly by p300/CBP, recruited to the complex by CPSF6. Acetylation decreases interaction with PAPAO. Deacetylated by the class I/II HDACs, HDAC1, HDAC3 and HDAC10, and by the class III HDACs, SIRT1 and SIRT2.</text>
</comment>
<comment type="similarity">
    <text evidence="25">Belongs to the Nudix hydrolase family. CPSF5 subfamily.</text>
</comment>
<comment type="caution">
    <text evidence="25">Lacks the conserved metal-binding residues in the NUDIX motif and does not have hydrolase activity.</text>
</comment>
<evidence type="ECO:0000250" key="1">
    <source>
        <dbReference type="UniProtKB" id="Q9CQF3"/>
    </source>
</evidence>
<evidence type="ECO:0000255" key="2">
    <source>
        <dbReference type="PROSITE-ProRule" id="PRU00794"/>
    </source>
</evidence>
<evidence type="ECO:0000269" key="3">
    <source>
    </source>
</evidence>
<evidence type="ECO:0000269" key="4">
    <source>
    </source>
</evidence>
<evidence type="ECO:0000269" key="5">
    <source>
    </source>
</evidence>
<evidence type="ECO:0000269" key="6">
    <source>
    </source>
</evidence>
<evidence type="ECO:0000269" key="7">
    <source>
    </source>
</evidence>
<evidence type="ECO:0000269" key="8">
    <source>
    </source>
</evidence>
<evidence type="ECO:0000269" key="9">
    <source>
    </source>
</evidence>
<evidence type="ECO:0000269" key="10">
    <source>
    </source>
</evidence>
<evidence type="ECO:0000269" key="11">
    <source>
    </source>
</evidence>
<evidence type="ECO:0000269" key="12">
    <source>
    </source>
</evidence>
<evidence type="ECO:0000269" key="13">
    <source>
    </source>
</evidence>
<evidence type="ECO:0000269" key="14">
    <source>
    </source>
</evidence>
<evidence type="ECO:0000269" key="15">
    <source>
    </source>
</evidence>
<evidence type="ECO:0000269" key="16">
    <source>
    </source>
</evidence>
<evidence type="ECO:0000269" key="17">
    <source>
    </source>
</evidence>
<evidence type="ECO:0000269" key="18">
    <source>
    </source>
</evidence>
<evidence type="ECO:0000269" key="19">
    <source>
    </source>
</evidence>
<evidence type="ECO:0000269" key="20">
    <source>
    </source>
</evidence>
<evidence type="ECO:0000269" key="21">
    <source ref="30"/>
</evidence>
<evidence type="ECO:0000269" key="22">
    <source ref="6"/>
</evidence>
<evidence type="ECO:0000303" key="23">
    <source>
    </source>
</evidence>
<evidence type="ECO:0000303" key="24">
    <source>
    </source>
</evidence>
<evidence type="ECO:0000305" key="25"/>
<evidence type="ECO:0000312" key="26">
    <source>
        <dbReference type="HGNC" id="HGNC:13870"/>
    </source>
</evidence>
<evidence type="ECO:0000312" key="27">
    <source>
        <dbReference type="PDB" id="3MDG"/>
    </source>
</evidence>
<evidence type="ECO:0000312" key="28">
    <source>
        <dbReference type="PDB" id="3MDI"/>
    </source>
</evidence>
<evidence type="ECO:0000312" key="29">
    <source>
        <dbReference type="PDB" id="3Q2T"/>
    </source>
</evidence>
<evidence type="ECO:0007744" key="30">
    <source>
    </source>
</evidence>
<evidence type="ECO:0007744" key="31">
    <source>
    </source>
</evidence>
<evidence type="ECO:0007744" key="32">
    <source>
    </source>
</evidence>
<evidence type="ECO:0007829" key="33">
    <source>
        <dbReference type="PDB" id="3BAP"/>
    </source>
</evidence>
<evidence type="ECO:0007829" key="34">
    <source>
        <dbReference type="PDB" id="3BHO"/>
    </source>
</evidence>
<evidence type="ECO:0007829" key="35">
    <source>
        <dbReference type="PDB" id="3N9U"/>
    </source>
</evidence>
<evidence type="ECO:0007829" key="36">
    <source>
        <dbReference type="PDB" id="5R4Q"/>
    </source>
</evidence>
<accession>O43809</accession>
<accession>Q6IB85</accession>
<accession>Q6NE84</accession>
<sequence>MSVVPPNRSQTGWPRGVTQFGNKYIQQTKPLTLERTINLYPLTNYTFGTKEPLYEKDSSVAARFQRMREEFDKIGMRRTVEGVLIVHEHRLPHVLLLQLGTTFFKLPGGELNPGEDEVEGLKRLMTEILGRQDGVLQDWVIDDCIGNWWRPNFEPPQYPYIPAHITKPKEHKKLFLVQLQEKALFAVPKNYKLVAAPLFELYDNAPGYGPIISSLPQLLSRFNFIYN</sequence>
<proteinExistence type="evidence at protein level"/>
<reference key="1">
    <citation type="journal article" date="1998" name="Mol. Cell">
        <title>Human pre-mRNA cleavage factor Im is related to spliceosomal SR proteins and can be reconstituted in vitro from recombinant subunits.</title>
        <authorList>
            <person name="Rueegsegger U."/>
            <person name="Blank D."/>
            <person name="Keller W."/>
        </authorList>
    </citation>
    <scope>NUCLEOTIDE SEQUENCE [MRNA]</scope>
    <scope>PROTEIN SEQUENCE OF 60-73 AND 183-189</scope>
    <scope>FUNCTION</scope>
    <scope>IDENTIFICATION IN THE CLEAVAGE FACTOR IM COMPLEX</scope>
    <scope>SUBCELLULAR LOCATION</scope>
    <source>
        <tissue>Brain</tissue>
    </source>
</reference>
<reference key="2">
    <citation type="submission" date="2004-06" db="EMBL/GenBank/DDBJ databases">
        <title>Cloning of human full open reading frames in Gateway(TM) system entry vector (pDONR201).</title>
        <authorList>
            <person name="Ebert L."/>
            <person name="Schick M."/>
            <person name="Neubert P."/>
            <person name="Schatten R."/>
            <person name="Henze S."/>
            <person name="Korn B."/>
        </authorList>
    </citation>
    <scope>NUCLEOTIDE SEQUENCE [LARGE SCALE MRNA]</scope>
</reference>
<reference key="3">
    <citation type="journal article" date="2007" name="BMC Genomics">
        <title>The full-ORF clone resource of the German cDNA consortium.</title>
        <authorList>
            <person name="Bechtel S."/>
            <person name="Rosenfelder H."/>
            <person name="Duda A."/>
            <person name="Schmidt C.P."/>
            <person name="Ernst U."/>
            <person name="Wellenreuther R."/>
            <person name="Mehrle A."/>
            <person name="Schuster C."/>
            <person name="Bahr A."/>
            <person name="Bloecker H."/>
            <person name="Heubner D."/>
            <person name="Hoerlein A."/>
            <person name="Michel G."/>
            <person name="Wedler H."/>
            <person name="Koehrer K."/>
            <person name="Ottenwaelder B."/>
            <person name="Poustka A."/>
            <person name="Wiemann S."/>
            <person name="Schupp I."/>
        </authorList>
    </citation>
    <scope>NUCLEOTIDE SEQUENCE [LARGE SCALE MRNA]</scope>
    <source>
        <tissue>Retina</tissue>
    </source>
</reference>
<reference key="4">
    <citation type="journal article" date="2004" name="Nature">
        <title>The sequence and analysis of duplication-rich human chromosome 16.</title>
        <authorList>
            <person name="Martin J."/>
            <person name="Han C."/>
            <person name="Gordon L.A."/>
            <person name="Terry A."/>
            <person name="Prabhakar S."/>
            <person name="She X."/>
            <person name="Xie G."/>
            <person name="Hellsten U."/>
            <person name="Chan Y.M."/>
            <person name="Altherr M."/>
            <person name="Couronne O."/>
            <person name="Aerts A."/>
            <person name="Bajorek E."/>
            <person name="Black S."/>
            <person name="Blumer H."/>
            <person name="Branscomb E."/>
            <person name="Brown N.C."/>
            <person name="Bruno W.J."/>
            <person name="Buckingham J.M."/>
            <person name="Callen D.F."/>
            <person name="Campbell C.S."/>
            <person name="Campbell M.L."/>
            <person name="Campbell E.W."/>
            <person name="Caoile C."/>
            <person name="Challacombe J.F."/>
            <person name="Chasteen L.A."/>
            <person name="Chertkov O."/>
            <person name="Chi H.C."/>
            <person name="Christensen M."/>
            <person name="Clark L.M."/>
            <person name="Cohn J.D."/>
            <person name="Denys M."/>
            <person name="Detter J.C."/>
            <person name="Dickson M."/>
            <person name="Dimitrijevic-Bussod M."/>
            <person name="Escobar J."/>
            <person name="Fawcett J.J."/>
            <person name="Flowers D."/>
            <person name="Fotopulos D."/>
            <person name="Glavina T."/>
            <person name="Gomez M."/>
            <person name="Gonzales E."/>
            <person name="Goodstein D."/>
            <person name="Goodwin L.A."/>
            <person name="Grady D.L."/>
            <person name="Grigoriev I."/>
            <person name="Groza M."/>
            <person name="Hammon N."/>
            <person name="Hawkins T."/>
            <person name="Haydu L."/>
            <person name="Hildebrand C.E."/>
            <person name="Huang W."/>
            <person name="Israni S."/>
            <person name="Jett J."/>
            <person name="Jewett P.B."/>
            <person name="Kadner K."/>
            <person name="Kimball H."/>
            <person name="Kobayashi A."/>
            <person name="Krawczyk M.-C."/>
            <person name="Leyba T."/>
            <person name="Longmire J.L."/>
            <person name="Lopez F."/>
            <person name="Lou Y."/>
            <person name="Lowry S."/>
            <person name="Ludeman T."/>
            <person name="Manohar C.F."/>
            <person name="Mark G.A."/>
            <person name="McMurray K.L."/>
            <person name="Meincke L.J."/>
            <person name="Morgan J."/>
            <person name="Moyzis R.K."/>
            <person name="Mundt M.O."/>
            <person name="Munk A.C."/>
            <person name="Nandkeshwar R.D."/>
            <person name="Pitluck S."/>
            <person name="Pollard M."/>
            <person name="Predki P."/>
            <person name="Parson-Quintana B."/>
            <person name="Ramirez L."/>
            <person name="Rash S."/>
            <person name="Retterer J."/>
            <person name="Ricke D.O."/>
            <person name="Robinson D.L."/>
            <person name="Rodriguez A."/>
            <person name="Salamov A."/>
            <person name="Saunders E.H."/>
            <person name="Scott D."/>
            <person name="Shough T."/>
            <person name="Stallings R.L."/>
            <person name="Stalvey M."/>
            <person name="Sutherland R.D."/>
            <person name="Tapia R."/>
            <person name="Tesmer J.G."/>
            <person name="Thayer N."/>
            <person name="Thompson L.S."/>
            <person name="Tice H."/>
            <person name="Torney D.C."/>
            <person name="Tran-Gyamfi M."/>
            <person name="Tsai M."/>
            <person name="Ulanovsky L.E."/>
            <person name="Ustaszewska A."/>
            <person name="Vo N."/>
            <person name="White P.S."/>
            <person name="Williams A.L."/>
            <person name="Wills P.L."/>
            <person name="Wu J.-R."/>
            <person name="Wu K."/>
            <person name="Yang J."/>
            <person name="DeJong P."/>
            <person name="Bruce D."/>
            <person name="Doggett N.A."/>
            <person name="Deaven L."/>
            <person name="Schmutz J."/>
            <person name="Grimwood J."/>
            <person name="Richardson P."/>
            <person name="Rokhsar D.S."/>
            <person name="Eichler E.E."/>
            <person name="Gilna P."/>
            <person name="Lucas S.M."/>
            <person name="Myers R.M."/>
            <person name="Rubin E.M."/>
            <person name="Pennacchio L.A."/>
        </authorList>
    </citation>
    <scope>NUCLEOTIDE SEQUENCE [LARGE SCALE GENOMIC DNA]</scope>
</reference>
<reference key="5">
    <citation type="journal article" date="2004" name="Genome Res.">
        <title>The status, quality, and expansion of the NIH full-length cDNA project: the Mammalian Gene Collection (MGC).</title>
        <authorList>
            <consortium name="The MGC Project Team"/>
        </authorList>
    </citation>
    <scope>NUCLEOTIDE SEQUENCE [LARGE SCALE MRNA]</scope>
    <source>
        <tissue>Placenta</tissue>
    </source>
</reference>
<reference key="6">
    <citation type="submission" date="2008-12" db="UniProtKB">
        <authorList>
            <person name="Bienvenut W.V."/>
            <person name="Lilla S."/>
            <person name="von Kriegsheim A."/>
            <person name="Lempens A."/>
            <person name="Kolch W."/>
        </authorList>
    </citation>
    <scope>PROTEIN SEQUENCE OF 2-15; 24-50 AND 79-131</scope>
    <scope>CLEAVAGE OF INITIATOR METHIONINE</scope>
    <scope>ACETYLATION AT SER-2</scope>
    <scope>IDENTIFICATION BY MASS SPECTROMETRY</scope>
    <source>
        <tissue>Ovarian carcinoma</tissue>
    </source>
</reference>
<reference key="7">
    <citation type="journal article" date="1996" name="J. Biol. Chem.">
        <title>Purification and characterization of human cleavage factor Im involved in the 3' end processing of messenger RNA precursors.</title>
        <authorList>
            <person name="Rueegsegger U."/>
            <person name="Beyer K."/>
            <person name="Keller W."/>
        </authorList>
    </citation>
    <scope>FUNCTION</scope>
    <scope>IDENTIFICATION IN A CLEAVAGE FACTOR IM COMPLEX</scope>
    <scope>RNA-BINDING</scope>
</reference>
<reference key="8">
    <citation type="journal article" date="2003" name="Mol. Cell">
        <title>A mechanism for the regulation of pre-mRNA 3' processing by human cleavage factor Im.</title>
        <authorList>
            <person name="Brown K.M."/>
            <person name="Gilmartin G.M."/>
        </authorList>
    </citation>
    <scope>FUNCTION</scope>
    <scope>RNA-BINDING</scope>
</reference>
<reference key="9">
    <citation type="journal article" date="2003" name="RNA">
        <title>Association of polyadenylation cleavage factor I with U1 snRNP.</title>
        <authorList>
            <person name="Awasthi S."/>
            <person name="Alwine J.C."/>
        </authorList>
    </citation>
    <scope>IDENTIFICATION IN A CLEAVAGE FACTOR IM COMPLEX</scope>
    <scope>INTERACTION WITH CPSF6 AND SNRNP70</scope>
    <scope>IDENTIFICATION BY MASS SPECTROMETRY</scope>
</reference>
<reference key="10">
    <citation type="journal article" date="2004" name="J. Biol. Chem.">
        <title>Distinct sequence motifs within the 68-kDa subunit of cleavage factor Im mediate RNA binding, protein-protein interactions, and subcellular localization.</title>
        <authorList>
            <person name="Dettwiler S."/>
            <person name="Aringhieri C."/>
            <person name="Cardinale S."/>
            <person name="Keller W."/>
            <person name="Barabino S.M."/>
        </authorList>
    </citation>
    <scope>IDENTIFICATION IN A CLEAVAGE FACTOR IM COMPLEX</scope>
    <scope>INTERACTION WITH CPSF6; PAPOLA AND PABPN1</scope>
    <scope>RNA-BINDING</scope>
    <scope>SUBCELLULAR LOCATION</scope>
    <scope>DOMAIN</scope>
</reference>
<reference key="11">
    <citation type="journal article" date="2005" name="Genes Dev.">
        <title>Analysis of a noncanonical poly(A) site reveals a tripartite mechanism for vertebrate poly(A) site recognition.</title>
        <authorList>
            <person name="Venkataraman K."/>
            <person name="Brown K.M."/>
            <person name="Gilmartin G.M."/>
        </authorList>
    </citation>
    <scope>FUNCTION</scope>
    <scope>INTERACTION WITH FIP1L1</scope>
</reference>
<reference key="12">
    <citation type="journal article" date="2005" name="Nat. Biotechnol.">
        <title>Immunoaffinity profiling of tyrosine phosphorylation in cancer cells.</title>
        <authorList>
            <person name="Rush J."/>
            <person name="Moritz A."/>
            <person name="Lee K.A."/>
            <person name="Guo A."/>
            <person name="Goss V.L."/>
            <person name="Spek E.J."/>
            <person name="Zhang H."/>
            <person name="Zha X.-M."/>
            <person name="Polakiewicz R.D."/>
            <person name="Comb M.J."/>
        </authorList>
    </citation>
    <scope>PHOSPHORYLATION [LARGE SCALE ANALYSIS] AT TYR-40</scope>
    <scope>IDENTIFICATION BY MASS SPECTROMETRY [LARGE SCALE ANALYSIS]</scope>
</reference>
<reference key="13">
    <citation type="journal article" date="2006" name="EMBO J.">
        <title>An interaction between U2AF 65 and CF I(m) links the splicing and 3' end processing machineries.</title>
        <authorList>
            <person name="Millevoi S."/>
            <person name="Loulergue C."/>
            <person name="Dettwiler S."/>
            <person name="Karaa S.Z."/>
            <person name="Keller W."/>
            <person name="Antoniou M."/>
            <person name="Vagner S."/>
        </authorList>
    </citation>
    <scope>FUNCTION</scope>
</reference>
<reference key="14">
    <citation type="journal article" date="2006" name="Nucleic Acids Res.">
        <title>Knock-down of 25 kDa subunit of cleavage factor Im in Hela cells alters alternative polyadenylation within 3'-UTRs.</title>
        <authorList>
            <person name="Kubo T."/>
            <person name="Wada T."/>
            <person name="Yamaguchi Y."/>
            <person name="Shimizu A."/>
            <person name="Handa H."/>
        </authorList>
    </citation>
    <scope>FUNCTION</scope>
    <scope>TISSUE SPECIFICITY</scope>
</reference>
<reference key="15">
    <citation type="journal article" date="2007" name="J. Biol. Chem.">
        <title>Multiple histone deacetylases and the CREB-binding protein regulate pre-mRNA 3'-end processing.</title>
        <authorList>
            <person name="Shimazu T."/>
            <person name="Horinouchi S."/>
            <person name="Yoshida M."/>
        </authorList>
    </citation>
    <scope>ACETYLATION AT LYS-23</scope>
    <scope>INTERACTION WITH PAPOLA AND CPSF6</scope>
    <scope>IDENTIFICATION BY MASS SPECTROMETRY</scope>
    <scope>MUTAGENESIS OF LYS-23 AND LYS-29</scope>
</reference>
<reference key="16">
    <citation type="journal article" date="2009" name="Mol. Biol. Cell">
        <title>Mammalian pre-mRNA 3' end processing factor CF I m 68 functions in mRNA export.</title>
        <authorList>
            <person name="Ruepp M.D."/>
            <person name="Aringhieri C."/>
            <person name="Vivarelli S."/>
            <person name="Cardinale S."/>
            <person name="Paro S."/>
            <person name="Schuemperli D."/>
            <person name="Barabino S.M."/>
        </authorList>
    </citation>
    <scope>SUBCELLULAR LOCATION</scope>
    <scope>INTERACTION WITH CPSF6</scope>
</reference>
<reference key="17">
    <citation type="journal article" date="2009" name="Science">
        <title>Lysine acetylation targets protein complexes and co-regulates major cellular functions.</title>
        <authorList>
            <person name="Choudhary C."/>
            <person name="Kumar C."/>
            <person name="Gnad F."/>
            <person name="Nielsen M.L."/>
            <person name="Rehman M."/>
            <person name="Walther T.C."/>
            <person name="Olsen J.V."/>
            <person name="Mann M."/>
        </authorList>
    </citation>
    <scope>ACETYLATION [LARGE SCALE ANALYSIS] AT LYS-23; LYS-29 AND LYS-56</scope>
    <scope>IDENTIFICATION BY MASS SPECTROMETRY [LARGE SCALE ANALYSIS]</scope>
</reference>
<reference key="18">
    <citation type="journal article" date="2010" name="Genes Cells">
        <title>Evidence that cleavage factor Im is a heterotetrameric protein complex controlling alternative polyadenylation.</title>
        <authorList>
            <person name="Kim S."/>
            <person name="Yamamoto J."/>
            <person name="Chen Y."/>
            <person name="Aida M."/>
            <person name="Wada T."/>
            <person name="Handa H."/>
            <person name="Yamaguchi Y."/>
        </authorList>
    </citation>
    <scope>FUNCTION</scope>
    <scope>IDENTIFICATION IN THE CLEAVAGE FACTOR IM COMPLEX</scope>
    <scope>SUBUNIT</scope>
    <scope>SUBSTRATE SPECIFICITY</scope>
    <scope>SUBCELLULAR LOCATION</scope>
</reference>
<reference key="19">
    <citation type="journal article" date="2011" name="BMC Syst. Biol.">
        <title>Initial characterization of the human central proteome.</title>
        <authorList>
            <person name="Burkard T.R."/>
            <person name="Planyavsky M."/>
            <person name="Kaupe I."/>
            <person name="Breitwieser F.P."/>
            <person name="Buerckstuemmer T."/>
            <person name="Bennett K.L."/>
            <person name="Superti-Furga G."/>
            <person name="Colinge J."/>
        </authorList>
    </citation>
    <scope>IDENTIFICATION BY MASS SPECTROMETRY [LARGE SCALE ANALYSIS]</scope>
</reference>
<reference key="20">
    <citation type="journal article" date="2012" name="Cell Rep.">
        <title>Genome-wide analysis of pre-mRNA 3' end processing reveals a decisive role of human cleavage factor I in the regulation of 3' UTR length.</title>
        <authorList>
            <person name="Martin G."/>
            <person name="Gruber A.R."/>
            <person name="Keller W."/>
            <person name="Zavolan M."/>
        </authorList>
    </citation>
    <scope>RNA-BINDING</scope>
</reference>
<reference key="21">
    <citation type="journal article" date="2012" name="RNA Biol.">
        <title>Cleavage factor Im is a key regulator of 3' UTR length.</title>
        <authorList>
            <person name="Gruber A.R."/>
            <person name="Martin G."/>
            <person name="Keller W."/>
            <person name="Zavolan M."/>
        </authorList>
    </citation>
    <scope>FUNCTION</scope>
    <scope>SUBUNIT</scope>
</reference>
<reference key="22">
    <citation type="journal article" date="2014" name="J. Proteomics">
        <title>An enzyme assisted RP-RPLC approach for in-depth analysis of human liver phosphoproteome.</title>
        <authorList>
            <person name="Bian Y."/>
            <person name="Song C."/>
            <person name="Cheng K."/>
            <person name="Dong M."/>
            <person name="Wang F."/>
            <person name="Huang J."/>
            <person name="Sun D."/>
            <person name="Wang L."/>
            <person name="Ye M."/>
            <person name="Zou H."/>
        </authorList>
    </citation>
    <scope>IDENTIFICATION BY MASS SPECTROMETRY [LARGE SCALE ANALYSIS]</scope>
    <source>
        <tissue>Liver</tissue>
    </source>
</reference>
<reference key="23">
    <citation type="journal article" date="2014" name="Mol. Cell. Proteomics">
        <title>Immunoaffinity enrichment and mass spectrometry analysis of protein methylation.</title>
        <authorList>
            <person name="Guo A."/>
            <person name="Gu H."/>
            <person name="Zhou J."/>
            <person name="Mulhern D."/>
            <person name="Wang Y."/>
            <person name="Lee K.A."/>
            <person name="Yang V."/>
            <person name="Aguiar M."/>
            <person name="Kornhauser J."/>
            <person name="Jia X."/>
            <person name="Ren J."/>
            <person name="Beausoleil S.A."/>
            <person name="Silva J.C."/>
            <person name="Vemulapalli V."/>
            <person name="Bedford M.T."/>
            <person name="Comb M.J."/>
        </authorList>
    </citation>
    <scope>METHYLATION [LARGE SCALE ANALYSIS] AT ARG-15</scope>
    <scope>IDENTIFICATION BY MASS SPECTROMETRY [LARGE SCALE ANALYSIS]</scope>
    <source>
        <tissue>Colon carcinoma</tissue>
    </source>
</reference>
<reference key="24">
    <citation type="journal article" date="2015" name="Proteomics">
        <title>N-terminome analysis of the human mitochondrial proteome.</title>
        <authorList>
            <person name="Vaca Jacome A.S."/>
            <person name="Rabilloud T."/>
            <person name="Schaeffer-Reiss C."/>
            <person name="Rompais M."/>
            <person name="Ayoub D."/>
            <person name="Lane L."/>
            <person name="Bairoch A."/>
            <person name="Van Dorsselaer A."/>
            <person name="Carapito C."/>
        </authorList>
    </citation>
    <scope>IDENTIFICATION BY MASS SPECTROMETRY [LARGE SCALE ANALYSIS]</scope>
</reference>
<reference key="25">
    <citation type="journal article" date="2018" name="Cell Discov.">
        <title>VIRMA mediates preferential m6A mRNA methylation in 3'UTR and near stop codon and associates with alternative polyadenylation.</title>
        <authorList>
            <person name="Yue Y."/>
            <person name="Liu J."/>
            <person name="Cui X."/>
            <person name="Cao J."/>
            <person name="Luo G."/>
            <person name="Zhang Z."/>
            <person name="Cheng T."/>
            <person name="Gao M."/>
            <person name="Shu X."/>
            <person name="Ma H."/>
            <person name="Wang F."/>
            <person name="Wang X."/>
            <person name="Shen B."/>
            <person name="Wang Y."/>
            <person name="Feng X."/>
            <person name="He C."/>
            <person name="Liu J."/>
        </authorList>
    </citation>
    <scope>INTERACTION WITH VIRMA</scope>
</reference>
<reference key="26">
    <citation type="journal article" date="2018" name="Mol. Cell">
        <title>Molecular mechanisms for CFIm-mediated regulation of mRNA alternative polyadenylation.</title>
        <authorList>
            <person name="Zhu Y."/>
            <person name="Wang X."/>
            <person name="Forouzmand E."/>
            <person name="Jeong J."/>
            <person name="Qiao F."/>
            <person name="Sowd G.A."/>
            <person name="Engelman A.N."/>
            <person name="Xie X."/>
            <person name="Hertel K.J."/>
            <person name="Shi Y."/>
        </authorList>
    </citation>
    <scope>FUNCTION</scope>
    <scope>INTERACTION WITH CPSF6 AND CPSF7</scope>
    <scope>IDENTIFICATION IN THE MRNA 3'-PROCESSING COMPLEX</scope>
    <scope>MUTAGENESIS OF LEU-218</scope>
</reference>
<reference key="27">
    <citation type="journal article" date="2008" name="Nucleic Acids Res.">
        <title>Crystal structure of the 25 kDa subunit of human cleavage factor Im.</title>
        <authorList>
            <person name="Coseno M."/>
            <person name="Martin G."/>
            <person name="Berger C."/>
            <person name="Gilmartin G."/>
            <person name="Keller W."/>
            <person name="Doublie S."/>
        </authorList>
    </citation>
    <scope>X-RAY CRYSTALLOGRAPHY (1.80 ANGSTROMS) OF APO FORM AND IN COMPLEX WITH BETA DIADENOSINE TETRAPHOSPHATE</scope>
    <scope>LACK OF METAL-BINDING</scope>
    <scope>HOMODIMERIZATION</scope>
</reference>
<reference key="28">
    <citation type="journal article" date="2008" name="Proteins">
        <title>The crystal structure of human cleavage and polyadenylation specific factor-5 reveals a dimeric Nudix protein with a conserved catalytic site.</title>
        <authorList>
            <person name="Tresaugues L."/>
            <person name="Stenmark P."/>
            <person name="Schaeler H."/>
            <person name="Flodin S."/>
            <person name="Welin M."/>
            <person name="Nyman T."/>
            <person name="Hammarstroem M."/>
            <person name="Moche M."/>
            <person name="Graeslund S."/>
            <person name="Nordlund P."/>
        </authorList>
    </citation>
    <scope>X-RAY CRYSTALLOGRAPHY (1.9 ANGSTROMS) OF APO FORM AND IN COMPLEX WITH SULFATE</scope>
</reference>
<reference key="29">
    <citation type="journal article" date="2010" name="Proc. Natl. Acad. Sci. U.S.A.">
        <title>Structural basis of UGUA recognition by the Nudix protein CFI(m)25 and implications for a regulatory role in mRNA 3' processing.</title>
        <authorList>
            <person name="Yang Q."/>
            <person name="Gilmartin G.M."/>
            <person name="Doublie S."/>
        </authorList>
    </citation>
    <scope>X-RAY CRYSTALLOGRAPHY (2.07 ANGSTROMS) IN COMPLEXES WITH RNA UGUAAA AND UUGUAU</scope>
    <scope>FUNCTION</scope>
    <scope>SUBUNIT</scope>
    <scope>MUTAGENESIS OF GLU-55; ARG-63; GLU-81 AND PHE-103</scope>
</reference>
<reference key="30">
    <citation type="submission" date="2010-07" db="PDB data bank">
        <title>Crystal structure of the complex between the 25 kDA subunit and the 59 kDA subunit (RRM domain) of human cleavage factor Im.</title>
        <authorList>
            <consortium name="Structural genomics consortium (SGC)"/>
        </authorList>
    </citation>
    <scope>X-RAY CRYSTALLOGRAPHY (1.92 ANGSTROMS) OF 21-227 IN COMPLEX WITH CPSF7</scope>
    <scope>SUBUNIT</scope>
</reference>
<reference key="31">
    <citation type="journal article" date="2011" name="Structure">
        <title>Crystal structure of a human cleavage factor CFI(m)25/CFI(m)68/RNA complex provides an insight into poly(A) site recognition and RNA looping.</title>
        <authorList>
            <person name="Yang Q."/>
            <person name="Coseno M."/>
            <person name="Gilmartin G.M."/>
            <person name="Doublie S."/>
        </authorList>
    </citation>
    <scope>X-RAY CRYSTALLOGRAPHY (2.9 ANGSTROMS) OF 21-227 IN COMPLEX WITH CPSF6 AND RNA</scope>
    <scope>FUNCTION</scope>
    <scope>SUBUNIT</scope>
    <scope>MUTAGENESIS OF GLU-55; ARG-63; PHE-103; TYR-158 AND TYR-160</scope>
</reference>
<organism>
    <name type="scientific">Homo sapiens</name>
    <name type="common">Human</name>
    <dbReference type="NCBI Taxonomy" id="9606"/>
    <lineage>
        <taxon>Eukaryota</taxon>
        <taxon>Metazoa</taxon>
        <taxon>Chordata</taxon>
        <taxon>Craniata</taxon>
        <taxon>Vertebrata</taxon>
        <taxon>Euteleostomi</taxon>
        <taxon>Mammalia</taxon>
        <taxon>Eutheria</taxon>
        <taxon>Euarchontoglires</taxon>
        <taxon>Primates</taxon>
        <taxon>Haplorrhini</taxon>
        <taxon>Catarrhini</taxon>
        <taxon>Hominidae</taxon>
        <taxon>Homo</taxon>
    </lineage>
</organism>
<keyword id="KW-0002">3D-structure</keyword>
<keyword id="KW-0007">Acetylation</keyword>
<keyword id="KW-0963">Cytoplasm</keyword>
<keyword id="KW-0221">Differentiation</keyword>
<keyword id="KW-0903">Direct protein sequencing</keyword>
<keyword id="KW-0488">Methylation</keyword>
<keyword id="KW-0507">mRNA processing</keyword>
<keyword id="KW-0539">Nucleus</keyword>
<keyword id="KW-0597">Phosphoprotein</keyword>
<keyword id="KW-1267">Proteomics identification</keyword>
<keyword id="KW-1185">Reference proteome</keyword>
<keyword id="KW-0694">RNA-binding</keyword>
<dbReference type="EMBL" id="AJ001810">
    <property type="protein sequence ID" value="CAA05026.1"/>
    <property type="molecule type" value="mRNA"/>
</dbReference>
<dbReference type="EMBL" id="CR456919">
    <property type="protein sequence ID" value="CAG33200.1"/>
    <property type="molecule type" value="mRNA"/>
</dbReference>
<dbReference type="EMBL" id="BX537360">
    <property type="protein sequence ID" value="CAD97606.1"/>
    <property type="molecule type" value="mRNA"/>
</dbReference>
<dbReference type="EMBL" id="AC092140">
    <property type="status" value="NOT_ANNOTATED_CDS"/>
    <property type="molecule type" value="Genomic_DNA"/>
</dbReference>
<dbReference type="EMBL" id="BC001403">
    <property type="protein sequence ID" value="AAH01403.1"/>
    <property type="molecule type" value="mRNA"/>
</dbReference>
<dbReference type="CCDS" id="CCDS10760.1"/>
<dbReference type="RefSeq" id="NP_008937.1">
    <property type="nucleotide sequence ID" value="NM_007006.3"/>
</dbReference>
<dbReference type="PDB" id="2CL3">
    <property type="method" value="X-ray"/>
    <property type="resolution" value="1.90 A"/>
    <property type="chains" value="A=21-227"/>
</dbReference>
<dbReference type="PDB" id="2J8Q">
    <property type="method" value="X-ray"/>
    <property type="resolution" value="2.30 A"/>
    <property type="chains" value="A/B=24-227"/>
</dbReference>
<dbReference type="PDB" id="3BAP">
    <property type="method" value="X-ray"/>
    <property type="resolution" value="1.85 A"/>
    <property type="chains" value="A=1-227"/>
</dbReference>
<dbReference type="PDB" id="3BHO">
    <property type="method" value="X-ray"/>
    <property type="resolution" value="1.80 A"/>
    <property type="chains" value="A=20-227"/>
</dbReference>
<dbReference type="PDB" id="3MDG">
    <property type="method" value="X-ray"/>
    <property type="resolution" value="2.22 A"/>
    <property type="chains" value="A/B=1-227"/>
</dbReference>
<dbReference type="PDB" id="3MDI">
    <property type="method" value="X-ray"/>
    <property type="resolution" value="2.07 A"/>
    <property type="chains" value="A/B=1-227"/>
</dbReference>
<dbReference type="PDB" id="3N9U">
    <property type="method" value="X-ray"/>
    <property type="resolution" value="1.92 A"/>
    <property type="chains" value="A/B=21-227"/>
</dbReference>
<dbReference type="PDB" id="3P5T">
    <property type="method" value="X-ray"/>
    <property type="resolution" value="2.70 A"/>
    <property type="chains" value="A/B/C/D/E/F=34-227"/>
</dbReference>
<dbReference type="PDB" id="3P6Y">
    <property type="method" value="X-ray"/>
    <property type="resolution" value="2.90 A"/>
    <property type="chains" value="A/B/E/F/I/J/M/N=34-227"/>
</dbReference>
<dbReference type="PDB" id="3Q2S">
    <property type="method" value="X-ray"/>
    <property type="resolution" value="2.90 A"/>
    <property type="chains" value="A/B=21-227"/>
</dbReference>
<dbReference type="PDB" id="3Q2T">
    <property type="method" value="X-ray"/>
    <property type="resolution" value="3.06 A"/>
    <property type="chains" value="A/B=21-227"/>
</dbReference>
<dbReference type="PDB" id="5R4P">
    <property type="method" value="X-ray"/>
    <property type="resolution" value="1.78 A"/>
    <property type="chains" value="A/B=33-227"/>
</dbReference>
<dbReference type="PDB" id="5R4Q">
    <property type="method" value="X-ray"/>
    <property type="resolution" value="1.49 A"/>
    <property type="chains" value="A/B=33-227"/>
</dbReference>
<dbReference type="PDB" id="5R4R">
    <property type="method" value="X-ray"/>
    <property type="resolution" value="1.50 A"/>
    <property type="chains" value="A/B=33-227"/>
</dbReference>
<dbReference type="PDB" id="5R4S">
    <property type="method" value="X-ray"/>
    <property type="resolution" value="1.61 A"/>
    <property type="chains" value="A/B=33-227"/>
</dbReference>
<dbReference type="PDB" id="5R4T">
    <property type="method" value="X-ray"/>
    <property type="resolution" value="1.68 A"/>
    <property type="chains" value="A/B=33-227"/>
</dbReference>
<dbReference type="PDB" id="5R4U">
    <property type="method" value="X-ray"/>
    <property type="resolution" value="1.92 A"/>
    <property type="chains" value="A/B=33-227"/>
</dbReference>
<dbReference type="PDB" id="5R64">
    <property type="method" value="X-ray"/>
    <property type="resolution" value="1.84 A"/>
    <property type="chains" value="A/B=33-227"/>
</dbReference>
<dbReference type="PDB" id="5R65">
    <property type="method" value="X-ray"/>
    <property type="resolution" value="2.28 A"/>
    <property type="chains" value="A/B=33-227"/>
</dbReference>
<dbReference type="PDB" id="5R66">
    <property type="method" value="X-ray"/>
    <property type="resolution" value="2.02 A"/>
    <property type="chains" value="A/B=33-227"/>
</dbReference>
<dbReference type="PDB" id="5R67">
    <property type="method" value="X-ray"/>
    <property type="resolution" value="1.52 A"/>
    <property type="chains" value="A/B=33-227"/>
</dbReference>
<dbReference type="PDBsum" id="2CL3"/>
<dbReference type="PDBsum" id="2J8Q"/>
<dbReference type="PDBsum" id="3BAP"/>
<dbReference type="PDBsum" id="3BHO"/>
<dbReference type="PDBsum" id="3MDG"/>
<dbReference type="PDBsum" id="3MDI"/>
<dbReference type="PDBsum" id="3N9U"/>
<dbReference type="PDBsum" id="3P5T"/>
<dbReference type="PDBsum" id="3P6Y"/>
<dbReference type="PDBsum" id="3Q2S"/>
<dbReference type="PDBsum" id="3Q2T"/>
<dbReference type="PDBsum" id="5R4P"/>
<dbReference type="PDBsum" id="5R4Q"/>
<dbReference type="PDBsum" id="5R4R"/>
<dbReference type="PDBsum" id="5R4S"/>
<dbReference type="PDBsum" id="5R4T"/>
<dbReference type="PDBsum" id="5R4U"/>
<dbReference type="PDBsum" id="5R64"/>
<dbReference type="PDBsum" id="5R65"/>
<dbReference type="PDBsum" id="5R66"/>
<dbReference type="PDBsum" id="5R67"/>
<dbReference type="SMR" id="O43809"/>
<dbReference type="BioGRID" id="116237">
    <property type="interactions" value="380"/>
</dbReference>
<dbReference type="ComplexPortal" id="CPX-941">
    <property type="entry name" value="mRNA cleavage factor I(m) complex, CPSF6 variant"/>
</dbReference>
<dbReference type="ComplexPortal" id="CPX-951">
    <property type="entry name" value="mRNA cleavage factor I(m) complex, CPSF7 variant"/>
</dbReference>
<dbReference type="CORUM" id="O43809"/>
<dbReference type="DIP" id="DIP-42502N"/>
<dbReference type="FunCoup" id="O43809">
    <property type="interactions" value="4077"/>
</dbReference>
<dbReference type="IntAct" id="O43809">
    <property type="interactions" value="129"/>
</dbReference>
<dbReference type="MINT" id="O43809"/>
<dbReference type="STRING" id="9606.ENSP00000300291"/>
<dbReference type="GlyGen" id="O43809">
    <property type="glycosylation" value="1 site, 1 O-linked glycan (1 site)"/>
</dbReference>
<dbReference type="iPTMnet" id="O43809"/>
<dbReference type="MetOSite" id="O43809"/>
<dbReference type="PhosphoSitePlus" id="O43809"/>
<dbReference type="SwissPalm" id="O43809"/>
<dbReference type="BioMuta" id="NUDT21"/>
<dbReference type="jPOST" id="O43809"/>
<dbReference type="MassIVE" id="O43809"/>
<dbReference type="PaxDb" id="9606-ENSP00000300291"/>
<dbReference type="PeptideAtlas" id="O43809"/>
<dbReference type="ProteomicsDB" id="49176"/>
<dbReference type="Pumba" id="O43809"/>
<dbReference type="TopDownProteomics" id="O43809"/>
<dbReference type="Antibodypedia" id="14781">
    <property type="antibodies" value="239 antibodies from 28 providers"/>
</dbReference>
<dbReference type="DNASU" id="11051"/>
<dbReference type="Ensembl" id="ENST00000300291.10">
    <property type="protein sequence ID" value="ENSP00000300291.5"/>
    <property type="gene ID" value="ENSG00000167005.14"/>
</dbReference>
<dbReference type="GeneID" id="11051"/>
<dbReference type="KEGG" id="hsa:11051"/>
<dbReference type="MANE-Select" id="ENST00000300291.10">
    <property type="protein sequence ID" value="ENSP00000300291.5"/>
    <property type="RefSeq nucleotide sequence ID" value="NM_007006.3"/>
    <property type="RefSeq protein sequence ID" value="NP_008937.1"/>
</dbReference>
<dbReference type="UCSC" id="uc002eja.4">
    <property type="organism name" value="human"/>
</dbReference>
<dbReference type="AGR" id="HGNC:13870"/>
<dbReference type="CTD" id="11051"/>
<dbReference type="DisGeNET" id="11051"/>
<dbReference type="GeneCards" id="NUDT21"/>
<dbReference type="HGNC" id="HGNC:13870">
    <property type="gene designation" value="NUDT21"/>
</dbReference>
<dbReference type="HPA" id="ENSG00000167005">
    <property type="expression patterns" value="Low tissue specificity"/>
</dbReference>
<dbReference type="MIM" id="604978">
    <property type="type" value="gene"/>
</dbReference>
<dbReference type="neXtProt" id="NX_O43809"/>
<dbReference type="OpenTargets" id="ENSG00000167005"/>
<dbReference type="PharmGKB" id="PA26845"/>
<dbReference type="VEuPathDB" id="HostDB:ENSG00000167005"/>
<dbReference type="eggNOG" id="KOG1689">
    <property type="taxonomic scope" value="Eukaryota"/>
</dbReference>
<dbReference type="GeneTree" id="ENSGT00390000015814"/>
<dbReference type="HOGENOM" id="CLU_068704_2_1_1"/>
<dbReference type="InParanoid" id="O43809"/>
<dbReference type="OMA" id="NDEWEIG"/>
<dbReference type="OrthoDB" id="277288at2759"/>
<dbReference type="PAN-GO" id="O43809">
    <property type="GO annotations" value="3 GO annotations based on evolutionary models"/>
</dbReference>
<dbReference type="PhylomeDB" id="O43809"/>
<dbReference type="TreeFam" id="TF106356"/>
<dbReference type="PathwayCommons" id="O43809"/>
<dbReference type="Reactome" id="R-HSA-72187">
    <property type="pathway name" value="mRNA 3'-end processing"/>
</dbReference>
<dbReference type="Reactome" id="R-HSA-72203">
    <property type="pathway name" value="Processing of Capped Intron-Containing Pre-mRNA"/>
</dbReference>
<dbReference type="Reactome" id="R-HSA-73856">
    <property type="pathway name" value="RNA Polymerase II Transcription Termination"/>
</dbReference>
<dbReference type="Reactome" id="R-HSA-77595">
    <property type="pathway name" value="Processing of Intronless Pre-mRNAs"/>
</dbReference>
<dbReference type="SignaLink" id="O43809"/>
<dbReference type="SIGNOR" id="O43809"/>
<dbReference type="BioGRID-ORCS" id="11051">
    <property type="hits" value="852 hits in 1168 CRISPR screens"/>
</dbReference>
<dbReference type="CD-CODE" id="1A18FFC4">
    <property type="entry name" value="Paraspeckle"/>
</dbReference>
<dbReference type="CD-CODE" id="91857CE7">
    <property type="entry name" value="Nucleolus"/>
</dbReference>
<dbReference type="ChiTaRS" id="NUDT21">
    <property type="organism name" value="human"/>
</dbReference>
<dbReference type="EvolutionaryTrace" id="O43809"/>
<dbReference type="GeneWiki" id="NUDT21"/>
<dbReference type="GenomeRNAi" id="11051"/>
<dbReference type="Pharos" id="O43809">
    <property type="development level" value="Tbio"/>
</dbReference>
<dbReference type="PRO" id="PR:O43809"/>
<dbReference type="Proteomes" id="UP000005640">
    <property type="component" value="Chromosome 16"/>
</dbReference>
<dbReference type="RNAct" id="O43809">
    <property type="molecule type" value="protein"/>
</dbReference>
<dbReference type="Bgee" id="ENSG00000167005">
    <property type="expression patterns" value="Expressed in primordial germ cell in gonad and 207 other cell types or tissues"/>
</dbReference>
<dbReference type="ExpressionAtlas" id="O43809">
    <property type="expression patterns" value="baseline and differential"/>
</dbReference>
<dbReference type="GO" id="GO:0034451">
    <property type="term" value="C:centriolar satellite"/>
    <property type="evidence" value="ECO:0000314"/>
    <property type="project" value="HPA"/>
</dbReference>
<dbReference type="GO" id="GO:0005813">
    <property type="term" value="C:centrosome"/>
    <property type="evidence" value="ECO:0000314"/>
    <property type="project" value="LIFEdb"/>
</dbReference>
<dbReference type="GO" id="GO:0005737">
    <property type="term" value="C:cytoplasm"/>
    <property type="evidence" value="ECO:0000314"/>
    <property type="project" value="UniProtKB"/>
</dbReference>
<dbReference type="GO" id="GO:0005847">
    <property type="term" value="C:mRNA cleavage and polyadenylation specificity factor complex"/>
    <property type="evidence" value="ECO:0000314"/>
    <property type="project" value="UniProtKB"/>
</dbReference>
<dbReference type="GO" id="GO:0005849">
    <property type="term" value="C:mRNA cleavage factor complex"/>
    <property type="evidence" value="ECO:0000314"/>
    <property type="project" value="UniProtKB"/>
</dbReference>
<dbReference type="GO" id="GO:0016604">
    <property type="term" value="C:nuclear body"/>
    <property type="evidence" value="ECO:0000314"/>
    <property type="project" value="HPA"/>
</dbReference>
<dbReference type="GO" id="GO:0005654">
    <property type="term" value="C:nucleoplasm"/>
    <property type="evidence" value="ECO:0000304"/>
    <property type="project" value="Reactome"/>
</dbReference>
<dbReference type="GO" id="GO:0005634">
    <property type="term" value="C:nucleus"/>
    <property type="evidence" value="ECO:0000314"/>
    <property type="project" value="UniProtKB"/>
</dbReference>
<dbReference type="GO" id="GO:0042382">
    <property type="term" value="C:paraspeckles"/>
    <property type="evidence" value="ECO:0000314"/>
    <property type="project" value="UniProtKB"/>
</dbReference>
<dbReference type="GO" id="GO:0003682">
    <property type="term" value="F:chromatin binding"/>
    <property type="evidence" value="ECO:0007669"/>
    <property type="project" value="Ensembl"/>
</dbReference>
<dbReference type="GO" id="GO:0042826">
    <property type="term" value="F:histone deacetylase binding"/>
    <property type="evidence" value="ECO:0000353"/>
    <property type="project" value="UniProtKB"/>
</dbReference>
<dbReference type="GO" id="GO:0042802">
    <property type="term" value="F:identical protein binding"/>
    <property type="evidence" value="ECO:0000314"/>
    <property type="project" value="UniProtKB"/>
</dbReference>
<dbReference type="GO" id="GO:0035925">
    <property type="term" value="F:mRNA 3'-UTR AU-rich region binding"/>
    <property type="evidence" value="ECO:0000314"/>
    <property type="project" value="UniProtKB"/>
</dbReference>
<dbReference type="GO" id="GO:0003729">
    <property type="term" value="F:mRNA binding"/>
    <property type="evidence" value="ECO:0000314"/>
    <property type="project" value="UniProtKB"/>
</dbReference>
<dbReference type="GO" id="GO:0042803">
    <property type="term" value="F:protein homodimerization activity"/>
    <property type="evidence" value="ECO:0000353"/>
    <property type="project" value="UniProtKB"/>
</dbReference>
<dbReference type="GO" id="GO:0003723">
    <property type="term" value="F:RNA binding"/>
    <property type="evidence" value="ECO:0007005"/>
    <property type="project" value="UniProtKB"/>
</dbReference>
<dbReference type="GO" id="GO:0030154">
    <property type="term" value="P:cell differentiation"/>
    <property type="evidence" value="ECO:0007669"/>
    <property type="project" value="UniProtKB-KW"/>
</dbReference>
<dbReference type="GO" id="GO:0180010">
    <property type="term" value="P:co-transcriptional mRNA 3'-end processing, cleavage and polyadenylation pathway"/>
    <property type="evidence" value="ECO:0000314"/>
    <property type="project" value="UniProtKB"/>
</dbReference>
<dbReference type="GO" id="GO:0031124">
    <property type="term" value="P:mRNA 3'-end processing"/>
    <property type="evidence" value="ECO:0000314"/>
    <property type="project" value="UniProtKB"/>
</dbReference>
<dbReference type="GO" id="GO:0110104">
    <property type="term" value="P:mRNA alternative polyadenylation"/>
    <property type="evidence" value="ECO:0000315"/>
    <property type="project" value="UniProtKB"/>
</dbReference>
<dbReference type="GO" id="GO:0006397">
    <property type="term" value="P:mRNA processing"/>
    <property type="evidence" value="ECO:0000314"/>
    <property type="project" value="UniProtKB"/>
</dbReference>
<dbReference type="GO" id="GO:2000975">
    <property type="term" value="P:positive regulation of pro-B cell differentiation"/>
    <property type="evidence" value="ECO:0000250"/>
    <property type="project" value="UniProtKB"/>
</dbReference>
<dbReference type="GO" id="GO:2000738">
    <property type="term" value="P:positive regulation of stem cell differentiation"/>
    <property type="evidence" value="ECO:0000250"/>
    <property type="project" value="UniProtKB"/>
</dbReference>
<dbReference type="GO" id="GO:0010608">
    <property type="term" value="P:post-transcriptional regulation of gene expression"/>
    <property type="evidence" value="ECO:0000250"/>
    <property type="project" value="UniProtKB"/>
</dbReference>
<dbReference type="GO" id="GO:0051290">
    <property type="term" value="P:protein heterotetramerization"/>
    <property type="evidence" value="ECO:0000314"/>
    <property type="project" value="UniProtKB"/>
</dbReference>
<dbReference type="GO" id="GO:0051262">
    <property type="term" value="P:protein tetramerization"/>
    <property type="evidence" value="ECO:0000314"/>
    <property type="project" value="UniProtKB"/>
</dbReference>
<dbReference type="CDD" id="cd18871">
    <property type="entry name" value="NUDIX_Cfim25_Nudt21"/>
    <property type="match status" value="1"/>
</dbReference>
<dbReference type="FunFam" id="3.90.79.10:FF:000008">
    <property type="entry name" value="cleavage and polyadenylation specificity factor subunit 5"/>
    <property type="match status" value="1"/>
</dbReference>
<dbReference type="Gene3D" id="3.90.79.10">
    <property type="entry name" value="Nucleoside Triphosphate Pyrophosphohydrolase"/>
    <property type="match status" value="1"/>
</dbReference>
<dbReference type="InterPro" id="IPR016706">
    <property type="entry name" value="Cleav_polyA_spec_factor_su5"/>
</dbReference>
<dbReference type="InterPro" id="IPR015797">
    <property type="entry name" value="NUDIX_hydrolase-like_dom_sf"/>
</dbReference>
<dbReference type="InterPro" id="IPR000086">
    <property type="entry name" value="NUDIX_hydrolase_dom"/>
</dbReference>
<dbReference type="PANTHER" id="PTHR13047">
    <property type="entry name" value="PRE-MRNA CLEAVAGE FACTOR IM, 25KD SUBUNIT"/>
    <property type="match status" value="1"/>
</dbReference>
<dbReference type="Pfam" id="PF13869">
    <property type="entry name" value="NUDIX_2"/>
    <property type="match status" value="1"/>
</dbReference>
<dbReference type="PIRSF" id="PIRSF017888">
    <property type="entry name" value="CPSF-25"/>
    <property type="match status" value="1"/>
</dbReference>
<dbReference type="SUPFAM" id="SSF55811">
    <property type="entry name" value="Nudix"/>
    <property type="match status" value="1"/>
</dbReference>
<dbReference type="PROSITE" id="PS51462">
    <property type="entry name" value="NUDIX"/>
    <property type="match status" value="1"/>
</dbReference>
<gene>
    <name evidence="26" type="primary">NUDT21</name>
    <name evidence="24" type="synonym">CFIM25</name>
    <name type="synonym">CPSF25</name>
    <name evidence="23" type="synonym">CPSF5</name>
</gene>
<feature type="initiator methionine" description="Removed" evidence="22">
    <location>
        <position position="1"/>
    </location>
</feature>
<feature type="chain" id="PRO_0000057150" description="Cleavage and polyadenylation specificity factor subunit 5">
    <location>
        <begin position="2"/>
        <end position="227"/>
    </location>
</feature>
<feature type="domain" description="Nudix hydrolase" evidence="2">
    <location>
        <begin position="76"/>
        <end position="201"/>
    </location>
</feature>
<feature type="region of interest" description="Necessary for RNA-binding" evidence="5">
    <location>
        <begin position="2"/>
        <end position="147"/>
    </location>
</feature>
<feature type="region of interest" description="Necessary for interactions with PAPOLA and PABPN1" evidence="5">
    <location>
        <begin position="81"/>
        <end position="160"/>
    </location>
</feature>
<feature type="region of interest" description="Interaction with RNA" evidence="12 14 27 28 29">
    <location>
        <begin position="102"/>
        <end position="104"/>
    </location>
</feature>
<feature type="short sequence motif" description="Nudix box">
    <location>
        <begin position="109"/>
        <end position="130"/>
    </location>
</feature>
<feature type="site" description="Interaction with RNA" evidence="12 27 28">
    <location>
        <position position="55"/>
    </location>
</feature>
<feature type="site" description="Interaction with RNA" evidence="12 27 28">
    <location>
        <position position="63"/>
    </location>
</feature>
<feature type="modified residue" description="N-acetylserine" evidence="22">
    <location>
        <position position="2"/>
    </location>
</feature>
<feature type="modified residue" description="Omega-N-methylarginine" evidence="32">
    <location>
        <position position="15"/>
    </location>
</feature>
<feature type="modified residue" description="N6-acetyllysine" evidence="9 31">
    <location>
        <position position="23"/>
    </location>
</feature>
<feature type="modified residue" description="N6-acetyllysine" evidence="31">
    <location>
        <position position="29"/>
    </location>
</feature>
<feature type="modified residue" description="Phosphotyrosine" evidence="30">
    <location>
        <position position="40"/>
    </location>
</feature>
<feature type="modified residue" description="N6-acetyllysine" evidence="31">
    <location>
        <position position="56"/>
    </location>
</feature>
<feature type="mutagenesis site" description="Abolishes acetylation." evidence="9">
    <original>K</original>
    <variation>R</variation>
    <location>
        <position position="23"/>
    </location>
</feature>
<feature type="mutagenesis site" description="No effect on acetylation." evidence="9">
    <original>K</original>
    <variation>R</variation>
    <location>
        <position position="29"/>
    </location>
</feature>
<feature type="mutagenesis site" description="Reduces affinity for UGUA RNA by 88%." evidence="12 14">
    <original>E</original>
    <variation>A</variation>
    <location>
        <position position="55"/>
    </location>
</feature>
<feature type="mutagenesis site" description="Reduces affinity for UGUA RNA by 99%." evidence="12 14">
    <original>R</original>
    <variation>S</variation>
    <location>
        <position position="63"/>
    </location>
</feature>
<feature type="mutagenesis site" description="Reduces affinity for UGUA RNA by 12%." evidence="12">
    <original>E</original>
    <variation>A</variation>
    <location>
        <position position="81"/>
    </location>
</feature>
<feature type="mutagenesis site" description="Reduces affinity for UGUA RNA by 99%." evidence="12 14">
    <original>F</original>
    <variation>A</variation>
    <location>
        <position position="103"/>
    </location>
</feature>
<feature type="mutagenesis site" description="Reduces affinity for UGUA RNA by over 90%." evidence="12 14">
    <original>F</original>
    <variation>W</variation>
    <location>
        <position position="103"/>
    </location>
</feature>
<feature type="mutagenesis site" description="Reduces affinity for UGUA RNA by 50%.">
    <original>E</original>
    <variation>A</variation>
    <location>
        <position position="154"/>
    </location>
</feature>
<feature type="mutagenesis site" description="Abolishes interaction with CPSF6; when associated with A-160." evidence="14">
    <original>Y</original>
    <variation>A</variation>
    <location>
        <position position="158"/>
    </location>
</feature>
<feature type="mutagenesis site" description="Abolishes interaction with CPSF6; when associated with A-158." evidence="14">
    <original>Y</original>
    <variation>A</variation>
    <location>
        <position position="160"/>
    </location>
</feature>
<feature type="mutagenesis site" description="Reduces interactions with CPSF6 and CPSF7 and decreases mRNA 3'-processing activity." evidence="17">
    <original>L</original>
    <variation>R</variation>
    <location>
        <position position="218"/>
    </location>
</feature>
<feature type="sequence conflict" description="In Ref. 2; CAG33200." evidence="25" ref="2">
    <original>D</original>
    <variation>G</variation>
    <location>
        <position position="57"/>
    </location>
</feature>
<feature type="sequence conflict" description="In Ref. 3; CAD97606." evidence="25" ref="3">
    <original>N</original>
    <variation>D</variation>
    <location>
        <position position="112"/>
    </location>
</feature>
<feature type="sequence conflict" description="In Ref. 3; CAD97606." evidence="25" ref="3">
    <original>L</original>
    <variation>P</variation>
    <location>
        <position position="218"/>
    </location>
</feature>
<feature type="turn" evidence="34">
    <location>
        <begin position="31"/>
        <end position="33"/>
    </location>
</feature>
<feature type="strand" evidence="36">
    <location>
        <begin position="36"/>
        <end position="39"/>
    </location>
</feature>
<feature type="helix" evidence="36">
    <location>
        <begin position="42"/>
        <end position="44"/>
    </location>
</feature>
<feature type="strand" evidence="36">
    <location>
        <begin position="45"/>
        <end position="51"/>
    </location>
</feature>
<feature type="helix" evidence="36">
    <location>
        <begin position="60"/>
        <end position="74"/>
    </location>
</feature>
<feature type="strand" evidence="36">
    <location>
        <begin position="76"/>
        <end position="88"/>
    </location>
</feature>
<feature type="strand" evidence="36">
    <location>
        <begin position="91"/>
        <end position="99"/>
    </location>
</feature>
<feature type="strand" evidence="33">
    <location>
        <begin position="100"/>
        <end position="102"/>
    </location>
</feature>
<feature type="strand" evidence="34">
    <location>
        <begin position="103"/>
        <end position="105"/>
    </location>
</feature>
<feature type="strand" evidence="36">
    <location>
        <begin position="107"/>
        <end position="110"/>
    </location>
</feature>
<feature type="helix" evidence="36">
    <location>
        <begin position="117"/>
        <end position="129"/>
    </location>
</feature>
<feature type="strand" evidence="35">
    <location>
        <begin position="132"/>
        <end position="134"/>
    </location>
</feature>
<feature type="strand" evidence="36">
    <location>
        <begin position="140"/>
        <end position="150"/>
    </location>
</feature>
<feature type="strand" evidence="36">
    <location>
        <begin position="152"/>
        <end position="155"/>
    </location>
</feature>
<feature type="strand" evidence="36">
    <location>
        <begin position="158"/>
        <end position="160"/>
    </location>
</feature>
<feature type="strand" evidence="36">
    <location>
        <begin position="169"/>
        <end position="178"/>
    </location>
</feature>
<feature type="strand" evidence="36">
    <location>
        <begin position="181"/>
        <end position="188"/>
    </location>
</feature>
<feature type="strand" evidence="36">
    <location>
        <begin position="191"/>
        <end position="197"/>
    </location>
</feature>
<feature type="helix" evidence="36">
    <location>
        <begin position="198"/>
        <end position="201"/>
    </location>
</feature>
<feature type="helix" evidence="36">
    <location>
        <begin position="205"/>
        <end position="212"/>
    </location>
</feature>
<feature type="helix" evidence="36">
    <location>
        <begin position="215"/>
        <end position="219"/>
    </location>
</feature>
<feature type="strand" evidence="36">
    <location>
        <begin position="222"/>
        <end position="226"/>
    </location>
</feature>
<protein>
    <recommendedName>
        <fullName evidence="23">Cleavage and polyadenylation specificity factor subunit 5</fullName>
    </recommendedName>
    <alternativeName>
        <fullName>Cleavage and polyadenylation specificity factor 25 kDa subunit</fullName>
        <shortName>CPSF 25 kDa subunit</shortName>
    </alternativeName>
    <alternativeName>
        <fullName evidence="24">Cleavage factor Im complex 25 kDa subunit</fullName>
        <shortName evidence="24">CFIm25</shortName>
    </alternativeName>
    <alternativeName>
        <fullName>Nucleoside diphosphate-linked moiety X motif 21</fullName>
        <shortName>Nudix motif 21</shortName>
    </alternativeName>
    <alternativeName>
        <fullName evidence="25">Nudix hydrolase 21</fullName>
    </alternativeName>
    <alternativeName>
        <fullName>Pre-mRNA cleavage factor Im 68 kDa subunit</fullName>
    </alternativeName>
</protein>